<organism>
    <name type="scientific">Psychromonas ingrahamii (strain DSM 17664 / CCUG 51855 / 37)</name>
    <dbReference type="NCBI Taxonomy" id="357804"/>
    <lineage>
        <taxon>Bacteria</taxon>
        <taxon>Pseudomonadati</taxon>
        <taxon>Pseudomonadota</taxon>
        <taxon>Gammaproteobacteria</taxon>
        <taxon>Alteromonadales</taxon>
        <taxon>Psychromonadaceae</taxon>
        <taxon>Psychromonas</taxon>
    </lineage>
</organism>
<proteinExistence type="inferred from homology"/>
<accession>A1SYK5</accession>
<gene>
    <name evidence="1" type="primary">deoA</name>
    <name type="ordered locus">Ping_2865</name>
</gene>
<comment type="function">
    <text evidence="1">The enzymes which catalyze the reversible phosphorolysis of pyrimidine nucleosides are involved in the degradation of these compounds and in their utilization as carbon and energy sources, or in the rescue of pyrimidine bases for nucleotide synthesis.</text>
</comment>
<comment type="catalytic activity">
    <reaction evidence="1">
        <text>thymidine + phosphate = 2-deoxy-alpha-D-ribose 1-phosphate + thymine</text>
        <dbReference type="Rhea" id="RHEA:16037"/>
        <dbReference type="ChEBI" id="CHEBI:17748"/>
        <dbReference type="ChEBI" id="CHEBI:17821"/>
        <dbReference type="ChEBI" id="CHEBI:43474"/>
        <dbReference type="ChEBI" id="CHEBI:57259"/>
        <dbReference type="EC" id="2.4.2.4"/>
    </reaction>
</comment>
<comment type="pathway">
    <text evidence="1">Pyrimidine metabolism; dTMP biosynthesis via salvage pathway; dTMP from thymine: step 1/2.</text>
</comment>
<comment type="subunit">
    <text evidence="1">Homodimer.</text>
</comment>
<comment type="similarity">
    <text evidence="1">Belongs to the thymidine/pyrimidine-nucleoside phosphorylase family.</text>
</comment>
<reference key="1">
    <citation type="journal article" date="2008" name="BMC Genomics">
        <title>Genomics of an extreme psychrophile, Psychromonas ingrahamii.</title>
        <authorList>
            <person name="Riley M."/>
            <person name="Staley J.T."/>
            <person name="Danchin A."/>
            <person name="Wang T.Z."/>
            <person name="Brettin T.S."/>
            <person name="Hauser L.J."/>
            <person name="Land M.L."/>
            <person name="Thompson L.S."/>
        </authorList>
    </citation>
    <scope>NUCLEOTIDE SEQUENCE [LARGE SCALE GENOMIC DNA]</scope>
    <source>
        <strain>DSM 17664 / CCUG 51855 / 37</strain>
    </source>
</reference>
<evidence type="ECO:0000255" key="1">
    <source>
        <dbReference type="HAMAP-Rule" id="MF_01628"/>
    </source>
</evidence>
<dbReference type="EC" id="2.4.2.4" evidence="1"/>
<dbReference type="EMBL" id="CP000510">
    <property type="protein sequence ID" value="ABM04570.1"/>
    <property type="molecule type" value="Genomic_DNA"/>
</dbReference>
<dbReference type="SMR" id="A1SYK5"/>
<dbReference type="STRING" id="357804.Ping_2865"/>
<dbReference type="KEGG" id="pin:Ping_2865"/>
<dbReference type="eggNOG" id="COG0213">
    <property type="taxonomic scope" value="Bacteria"/>
</dbReference>
<dbReference type="HOGENOM" id="CLU_025040_0_1_6"/>
<dbReference type="OrthoDB" id="9763887at2"/>
<dbReference type="UniPathway" id="UPA00578">
    <property type="reaction ID" value="UER00638"/>
</dbReference>
<dbReference type="Proteomes" id="UP000000639">
    <property type="component" value="Chromosome"/>
</dbReference>
<dbReference type="GO" id="GO:0005829">
    <property type="term" value="C:cytosol"/>
    <property type="evidence" value="ECO:0007669"/>
    <property type="project" value="TreeGrafter"/>
</dbReference>
<dbReference type="GO" id="GO:0004645">
    <property type="term" value="F:1,4-alpha-oligoglucan phosphorylase activity"/>
    <property type="evidence" value="ECO:0007669"/>
    <property type="project" value="InterPro"/>
</dbReference>
<dbReference type="GO" id="GO:0009032">
    <property type="term" value="F:thymidine phosphorylase activity"/>
    <property type="evidence" value="ECO:0007669"/>
    <property type="project" value="UniProtKB-UniRule"/>
</dbReference>
<dbReference type="GO" id="GO:0006206">
    <property type="term" value="P:pyrimidine nucleobase metabolic process"/>
    <property type="evidence" value="ECO:0007669"/>
    <property type="project" value="InterPro"/>
</dbReference>
<dbReference type="GO" id="GO:0046104">
    <property type="term" value="P:thymidine metabolic process"/>
    <property type="evidence" value="ECO:0007669"/>
    <property type="project" value="UniProtKB-UniRule"/>
</dbReference>
<dbReference type="FunFam" id="3.40.1030.10:FF:000001">
    <property type="entry name" value="Thymidine phosphorylase"/>
    <property type="match status" value="1"/>
</dbReference>
<dbReference type="FunFam" id="3.90.1170.30:FF:000001">
    <property type="entry name" value="Thymidine phosphorylase"/>
    <property type="match status" value="1"/>
</dbReference>
<dbReference type="Gene3D" id="3.40.1030.10">
    <property type="entry name" value="Nucleoside phosphorylase/phosphoribosyltransferase catalytic domain"/>
    <property type="match status" value="1"/>
</dbReference>
<dbReference type="Gene3D" id="3.90.1170.30">
    <property type="entry name" value="Pyrimidine nucleoside phosphorylase-like, C-terminal domain"/>
    <property type="match status" value="1"/>
</dbReference>
<dbReference type="Gene3D" id="1.20.970.10">
    <property type="entry name" value="Transferase, Pyrimidine Nucleoside Phosphorylase, Chain C"/>
    <property type="match status" value="1"/>
</dbReference>
<dbReference type="HAMAP" id="MF_01628">
    <property type="entry name" value="Thymid_phosp"/>
    <property type="match status" value="1"/>
</dbReference>
<dbReference type="InterPro" id="IPR000312">
    <property type="entry name" value="Glycosyl_Trfase_fam3"/>
</dbReference>
<dbReference type="InterPro" id="IPR017459">
    <property type="entry name" value="Glycosyl_Trfase_fam3_N_dom"/>
</dbReference>
<dbReference type="InterPro" id="IPR036320">
    <property type="entry name" value="Glycosyl_Trfase_fam3_N_dom_sf"/>
</dbReference>
<dbReference type="InterPro" id="IPR035902">
    <property type="entry name" value="Nuc_phospho_transferase"/>
</dbReference>
<dbReference type="InterPro" id="IPR036566">
    <property type="entry name" value="PYNP-like_C_sf"/>
</dbReference>
<dbReference type="InterPro" id="IPR013102">
    <property type="entry name" value="PYNP_C"/>
</dbReference>
<dbReference type="InterPro" id="IPR018090">
    <property type="entry name" value="Pyrmidine_PPas_bac/euk"/>
</dbReference>
<dbReference type="InterPro" id="IPR017872">
    <property type="entry name" value="Pyrmidine_PPase_CS"/>
</dbReference>
<dbReference type="InterPro" id="IPR000053">
    <property type="entry name" value="Thymidine/pyrmidine_PPase"/>
</dbReference>
<dbReference type="InterPro" id="IPR013465">
    <property type="entry name" value="Thymidine_Pase"/>
</dbReference>
<dbReference type="NCBIfam" id="NF004490">
    <property type="entry name" value="PRK05820.1"/>
    <property type="match status" value="1"/>
</dbReference>
<dbReference type="NCBIfam" id="TIGR02643">
    <property type="entry name" value="T_phosphoryl"/>
    <property type="match status" value="1"/>
</dbReference>
<dbReference type="NCBIfam" id="TIGR02644">
    <property type="entry name" value="Y_phosphoryl"/>
    <property type="match status" value="1"/>
</dbReference>
<dbReference type="PANTHER" id="PTHR10515">
    <property type="entry name" value="THYMIDINE PHOSPHORYLASE"/>
    <property type="match status" value="1"/>
</dbReference>
<dbReference type="PANTHER" id="PTHR10515:SF0">
    <property type="entry name" value="THYMIDINE PHOSPHORYLASE"/>
    <property type="match status" value="1"/>
</dbReference>
<dbReference type="Pfam" id="PF02885">
    <property type="entry name" value="Glycos_trans_3N"/>
    <property type="match status" value="1"/>
</dbReference>
<dbReference type="Pfam" id="PF00591">
    <property type="entry name" value="Glycos_transf_3"/>
    <property type="match status" value="1"/>
</dbReference>
<dbReference type="Pfam" id="PF07831">
    <property type="entry name" value="PYNP_C"/>
    <property type="match status" value="1"/>
</dbReference>
<dbReference type="PIRSF" id="PIRSF000478">
    <property type="entry name" value="TP_PyNP"/>
    <property type="match status" value="1"/>
</dbReference>
<dbReference type="SMART" id="SM00941">
    <property type="entry name" value="PYNP_C"/>
    <property type="match status" value="1"/>
</dbReference>
<dbReference type="SUPFAM" id="SSF52418">
    <property type="entry name" value="Nucleoside phosphorylase/phosphoribosyltransferase catalytic domain"/>
    <property type="match status" value="1"/>
</dbReference>
<dbReference type="SUPFAM" id="SSF47648">
    <property type="entry name" value="Nucleoside phosphorylase/phosphoribosyltransferase N-terminal domain"/>
    <property type="match status" value="1"/>
</dbReference>
<dbReference type="SUPFAM" id="SSF54680">
    <property type="entry name" value="Pyrimidine nucleoside phosphorylase C-terminal domain"/>
    <property type="match status" value="1"/>
</dbReference>
<dbReference type="PROSITE" id="PS00647">
    <property type="entry name" value="THYMID_PHOSPHORYLASE"/>
    <property type="match status" value="1"/>
</dbReference>
<sequence length="446" mass="47206">MILLPQEIIRNKRDGKTLSRQEIDFFIKGITDNSVTEGQIAAFAMAVYFQDMNMDERVLLVSAMRDSGQVINWQSLNLNGPVVDKHSTGGVGDVTSLILGPMVAACGGYVPMISGRGLGHTGGTLDKLDAISGYKTTPDSLDHFRKIVKEVGVAIIGQTGDLAPADKRFYATRDITATVESIPLITASILSKKLAAGIDALVMDVKAGSGAFMPTFEQSEALANSIVGVANGAGCKTSALITNMDQVLASSAGNAVEVREAVRFLKGEVVNPRLHEVTMALCAEMLLLSGLAADIKEAQAKLQKVLDNGKAAEVFAKMVGALGGPADFIENQDNYLQKSAIVRPVYAQHSGIVQSMDTRALGMAVVNLGGGRHSASDSIDYAVGLSGILSLGESADSEKPLAMIHAQSEKQFSEAQRAIQSAIICGTDSLQAQTQVYRHIRLPDIS</sequence>
<name>TYPH_PSYIN</name>
<keyword id="KW-0328">Glycosyltransferase</keyword>
<keyword id="KW-1185">Reference proteome</keyword>
<keyword id="KW-0808">Transferase</keyword>
<protein>
    <recommendedName>
        <fullName evidence="1">Thymidine phosphorylase</fullName>
        <ecNumber evidence="1">2.4.2.4</ecNumber>
    </recommendedName>
    <alternativeName>
        <fullName evidence="1">TdRPase</fullName>
    </alternativeName>
</protein>
<feature type="chain" id="PRO_0000335774" description="Thymidine phosphorylase">
    <location>
        <begin position="1"/>
        <end position="446"/>
    </location>
</feature>